<gene>
    <name type="primary">ALAS1</name>
</gene>
<sequence>METVVRRCPFLSRVPQAFLQKAGKSLLFYAQNCPKMMEIGAKPAPRALSTSAVLCQQVTETPPANEKDKAAKAEVQQAPDGSQQAPDGSQQTADGTQLPSGHPSLASSQGTGSKCPFLAAEMSQGGSSVFRKASLALQEDVQEMHAVREEVAQTSVNPSVINVKTEGGELNGLLKNFQDIMRKQRPERVSHLLQDNLPKSVCTFQYDRFFEKKIDEKKNDHSYRVFKTVNRKAQCFPMADDYSDSLISKKQVSVWCSNDYLGMSRHPRVCGAVIDTLKQHGTGAGGTRNISGTSKFHVDLEQELADLHGKDAALLFSSCFVANDSTLFTLAKMMPGCEIYSDAGNHASMIQGIRNSGVPKYIFRHNDVSHLRELLQRSDPAVPKIVAFETVHSMDGAVCPLEELCDVAHEFGAITFVDEVHAVGLYGLQGGGIGDRDGVMPKMDIISGTLGKAIGCVGGYIASTSSLIDTVRSYAAGFIFTTSLPPMLLAGALESVRILRSTEGRTLRRQHQRNVKLMRQMLMDAGLPVVHCPSHIIPVRVADAAKNTEVCDELMTRHNIYVQAINYPTVPRGEELLRIAPTPHHTPQMMSYFVDNLLATWKRVGLELKPHSSAECNFCRRPLHFEMMSEREKSYFSGMSKLVSAQA</sequence>
<protein>
    <recommendedName>
        <fullName>5-aminolevulinate synthase, non-specific, mitochondrial</fullName>
        <shortName>ALAS-H</shortName>
        <ecNumber evidence="2">2.3.1.37</ecNumber>
    </recommendedName>
    <alternativeName>
        <fullName>5-aminolevulinic acid synthase 1</fullName>
    </alternativeName>
    <alternativeName>
        <fullName>Delta-ALA synthase 1</fullName>
    </alternativeName>
    <alternativeName>
        <fullName>Delta-aminolevulinate synthase 1</fullName>
    </alternativeName>
</protein>
<dbReference type="EC" id="2.3.1.37" evidence="2"/>
<dbReference type="EMBL" id="BC147978">
    <property type="protein sequence ID" value="AAI47979.1"/>
    <property type="molecule type" value="mRNA"/>
</dbReference>
<dbReference type="RefSeq" id="NP_001094624.1">
    <property type="nucleotide sequence ID" value="NM_001101154.1"/>
</dbReference>
<dbReference type="SMR" id="A6QLI6"/>
<dbReference type="FunCoup" id="A6QLI6">
    <property type="interactions" value="663"/>
</dbReference>
<dbReference type="STRING" id="9913.ENSBTAP00000005380"/>
<dbReference type="PaxDb" id="9913-ENSBTAP00000005380"/>
<dbReference type="GeneID" id="534286"/>
<dbReference type="KEGG" id="bta:534286"/>
<dbReference type="CTD" id="211"/>
<dbReference type="eggNOG" id="KOG1360">
    <property type="taxonomic scope" value="Eukaryota"/>
</dbReference>
<dbReference type="HOGENOM" id="CLU_015846_6_1_1"/>
<dbReference type="InParanoid" id="A6QLI6"/>
<dbReference type="OrthoDB" id="10263824at2759"/>
<dbReference type="TreeFam" id="TF300724"/>
<dbReference type="UniPathway" id="UPA00251">
    <property type="reaction ID" value="UER00375"/>
</dbReference>
<dbReference type="Proteomes" id="UP000009136">
    <property type="component" value="Unplaced"/>
</dbReference>
<dbReference type="GO" id="GO:0005743">
    <property type="term" value="C:mitochondrial inner membrane"/>
    <property type="evidence" value="ECO:0007669"/>
    <property type="project" value="UniProtKB-SubCell"/>
</dbReference>
<dbReference type="GO" id="GO:0005759">
    <property type="term" value="C:mitochondrial matrix"/>
    <property type="evidence" value="ECO:0007669"/>
    <property type="project" value="InterPro"/>
</dbReference>
<dbReference type="GO" id="GO:0005739">
    <property type="term" value="C:mitochondrion"/>
    <property type="evidence" value="ECO:0000318"/>
    <property type="project" value="GO_Central"/>
</dbReference>
<dbReference type="GO" id="GO:0003870">
    <property type="term" value="F:5-aminolevulinate synthase activity"/>
    <property type="evidence" value="ECO:0000250"/>
    <property type="project" value="UniProtKB"/>
</dbReference>
<dbReference type="GO" id="GO:0030170">
    <property type="term" value="F:pyridoxal phosphate binding"/>
    <property type="evidence" value="ECO:0007669"/>
    <property type="project" value="InterPro"/>
</dbReference>
<dbReference type="GO" id="GO:0048821">
    <property type="term" value="P:erythrocyte development"/>
    <property type="evidence" value="ECO:0000318"/>
    <property type="project" value="GO_Central"/>
</dbReference>
<dbReference type="GO" id="GO:0006783">
    <property type="term" value="P:heme biosynthetic process"/>
    <property type="evidence" value="ECO:0000318"/>
    <property type="project" value="GO_Central"/>
</dbReference>
<dbReference type="GO" id="GO:0042541">
    <property type="term" value="P:hemoglobin biosynthetic process"/>
    <property type="evidence" value="ECO:0000318"/>
    <property type="project" value="GO_Central"/>
</dbReference>
<dbReference type="GO" id="GO:0006782">
    <property type="term" value="P:protoporphyrinogen IX biosynthetic process"/>
    <property type="evidence" value="ECO:0007669"/>
    <property type="project" value="UniProtKB-UniPathway"/>
</dbReference>
<dbReference type="GO" id="GO:1903412">
    <property type="term" value="P:response to bile acid"/>
    <property type="evidence" value="ECO:0000250"/>
    <property type="project" value="UniProtKB"/>
</dbReference>
<dbReference type="CDD" id="cd06454">
    <property type="entry name" value="KBL_like"/>
    <property type="match status" value="1"/>
</dbReference>
<dbReference type="FunFam" id="3.90.1150.10:FF:000045">
    <property type="entry name" value="5-aminolevulinate synthase"/>
    <property type="match status" value="1"/>
</dbReference>
<dbReference type="FunFam" id="3.40.640.10:FF:000006">
    <property type="entry name" value="5-aminolevulinate synthase, mitochondrial"/>
    <property type="match status" value="1"/>
</dbReference>
<dbReference type="Gene3D" id="3.90.1150.10">
    <property type="entry name" value="Aspartate Aminotransferase, domain 1"/>
    <property type="match status" value="1"/>
</dbReference>
<dbReference type="Gene3D" id="3.40.640.10">
    <property type="entry name" value="Type I PLP-dependent aspartate aminotransferase-like (Major domain)"/>
    <property type="match status" value="1"/>
</dbReference>
<dbReference type="InterPro" id="IPR010961">
    <property type="entry name" value="4pyrrol_synth_NH2levulA_synth"/>
</dbReference>
<dbReference type="InterPro" id="IPR015118">
    <property type="entry name" value="5aminolev_synth_preseq"/>
</dbReference>
<dbReference type="InterPro" id="IPR001917">
    <property type="entry name" value="Aminotrans_II_pyridoxalP_BS"/>
</dbReference>
<dbReference type="InterPro" id="IPR004839">
    <property type="entry name" value="Aminotransferase_I/II_large"/>
</dbReference>
<dbReference type="InterPro" id="IPR050087">
    <property type="entry name" value="AON_synthase_class-II"/>
</dbReference>
<dbReference type="InterPro" id="IPR015424">
    <property type="entry name" value="PyrdxlP-dep_Trfase"/>
</dbReference>
<dbReference type="InterPro" id="IPR015421">
    <property type="entry name" value="PyrdxlP-dep_Trfase_major"/>
</dbReference>
<dbReference type="InterPro" id="IPR015422">
    <property type="entry name" value="PyrdxlP-dep_Trfase_small"/>
</dbReference>
<dbReference type="NCBIfam" id="TIGR01821">
    <property type="entry name" value="5aminolev_synth"/>
    <property type="match status" value="1"/>
</dbReference>
<dbReference type="PANTHER" id="PTHR13693:SF50">
    <property type="entry name" value="5-AMINOLEVULINATE SYNTHASE, NON-SPECIFIC, MITOCHONDRIAL"/>
    <property type="match status" value="1"/>
</dbReference>
<dbReference type="PANTHER" id="PTHR13693">
    <property type="entry name" value="CLASS II AMINOTRANSFERASE/8-AMINO-7-OXONONANOATE SYNTHASE"/>
    <property type="match status" value="1"/>
</dbReference>
<dbReference type="Pfam" id="PF00155">
    <property type="entry name" value="Aminotran_1_2"/>
    <property type="match status" value="1"/>
</dbReference>
<dbReference type="Pfam" id="PF09029">
    <property type="entry name" value="Preseq_ALAS"/>
    <property type="match status" value="1"/>
</dbReference>
<dbReference type="SUPFAM" id="SSF53383">
    <property type="entry name" value="PLP-dependent transferases"/>
    <property type="match status" value="1"/>
</dbReference>
<dbReference type="PROSITE" id="PS00599">
    <property type="entry name" value="AA_TRANSFER_CLASS_2"/>
    <property type="match status" value="1"/>
</dbReference>
<organism>
    <name type="scientific">Bos taurus</name>
    <name type="common">Bovine</name>
    <dbReference type="NCBI Taxonomy" id="9913"/>
    <lineage>
        <taxon>Eukaryota</taxon>
        <taxon>Metazoa</taxon>
        <taxon>Chordata</taxon>
        <taxon>Craniata</taxon>
        <taxon>Vertebrata</taxon>
        <taxon>Euteleostomi</taxon>
        <taxon>Mammalia</taxon>
        <taxon>Eutheria</taxon>
        <taxon>Laurasiatheria</taxon>
        <taxon>Artiodactyla</taxon>
        <taxon>Ruminantia</taxon>
        <taxon>Pecora</taxon>
        <taxon>Bovidae</taxon>
        <taxon>Bovinae</taxon>
        <taxon>Bos</taxon>
    </lineage>
</organism>
<accession>A6QLI6</accession>
<comment type="function">
    <text evidence="2">Catalyzes the pyridoxal 5'-phosphate (PLP)-dependent condensation of succinyl-CoA and glycine to form aminolevulinic acid (ALA), with CoA and CO2 as by-products.</text>
</comment>
<comment type="catalytic activity">
    <reaction evidence="2">
        <text>succinyl-CoA + glycine + H(+) = 5-aminolevulinate + CO2 + CoA</text>
        <dbReference type="Rhea" id="RHEA:12921"/>
        <dbReference type="ChEBI" id="CHEBI:15378"/>
        <dbReference type="ChEBI" id="CHEBI:16526"/>
        <dbReference type="ChEBI" id="CHEBI:57287"/>
        <dbReference type="ChEBI" id="CHEBI:57292"/>
        <dbReference type="ChEBI" id="CHEBI:57305"/>
        <dbReference type="ChEBI" id="CHEBI:356416"/>
        <dbReference type="EC" id="2.3.1.37"/>
    </reaction>
    <physiologicalReaction direction="left-to-right" evidence="2">
        <dbReference type="Rhea" id="RHEA:12922"/>
    </physiologicalReaction>
</comment>
<comment type="cofactor">
    <cofactor evidence="2">
        <name>pyridoxal 5'-phosphate</name>
        <dbReference type="ChEBI" id="CHEBI:597326"/>
    </cofactor>
</comment>
<comment type="pathway">
    <text>Porphyrin-containing compound metabolism; protoporphyrin-IX biosynthesis; 5-aminolevulinate from glycine: step 1/1.</text>
</comment>
<comment type="subunit">
    <text evidence="2 4">Homodimer (By similarity). Interacts (hydroxylated form) with VHL (By similarity).</text>
</comment>
<comment type="subcellular location">
    <subcellularLocation>
        <location evidence="4">Mitochondrion inner membrane</location>
        <topology evidence="4">Peripheral membrane protein</topology>
    </subcellularLocation>
    <text evidence="4">Localizes to the matrix side of the mitochondrion inner membrane.</text>
</comment>
<comment type="PTM">
    <text evidence="2">In normoxia, is hydroxylated at Pro-583, promoting interaction with VHL, initiating ubiquitination and subsequent degradation via the proteasome.</text>
</comment>
<comment type="PTM">
    <text evidence="2">Ubiquitinated; in normoxia following hydroxylation and interaction with VHL, leading to its subsequent degradation via the proteasome.</text>
</comment>
<comment type="similarity">
    <text evidence="6">Belongs to the class-II pyridoxal-phosphate-dependent aminotransferase family.</text>
</comment>
<keyword id="KW-0012">Acyltransferase</keyword>
<keyword id="KW-0350">Heme biosynthesis</keyword>
<keyword id="KW-0379">Hydroxylation</keyword>
<keyword id="KW-0472">Membrane</keyword>
<keyword id="KW-0496">Mitochondrion</keyword>
<keyword id="KW-0999">Mitochondrion inner membrane</keyword>
<keyword id="KW-0663">Pyridoxal phosphate</keyword>
<keyword id="KW-1185">Reference proteome</keyword>
<keyword id="KW-0808">Transferase</keyword>
<keyword id="KW-0809">Transit peptide</keyword>
<keyword id="KW-0832">Ubl conjugation</keyword>
<name>HEM1_BOVIN</name>
<proteinExistence type="evidence at transcript level"/>
<reference key="1">
    <citation type="submission" date="2007-06" db="EMBL/GenBank/DDBJ databases">
        <authorList>
            <consortium name="NIH - Mammalian Gene Collection (MGC) project"/>
        </authorList>
    </citation>
    <scope>NUCLEOTIDE SEQUENCE [LARGE SCALE MRNA]</scope>
    <source>
        <strain>Hereford</strain>
        <tissue>Brain cortex</tissue>
    </source>
</reference>
<evidence type="ECO:0000250" key="1">
    <source>
        <dbReference type="UniProtKB" id="P07997"/>
    </source>
</evidence>
<evidence type="ECO:0000250" key="2">
    <source>
        <dbReference type="UniProtKB" id="P13196"/>
    </source>
</evidence>
<evidence type="ECO:0000250" key="3">
    <source>
        <dbReference type="UniProtKB" id="P18079"/>
    </source>
</evidence>
<evidence type="ECO:0000250" key="4">
    <source>
        <dbReference type="UniProtKB" id="P22557"/>
    </source>
</evidence>
<evidence type="ECO:0000256" key="5">
    <source>
        <dbReference type="SAM" id="MobiDB-lite"/>
    </source>
</evidence>
<evidence type="ECO:0000305" key="6"/>
<feature type="transit peptide" description="Mitochondrion" evidence="1">
    <location>
        <begin position="1"/>
        <end position="56"/>
    </location>
</feature>
<feature type="chain" id="PRO_0000352676" description="5-aminolevulinate synthase, non-specific, mitochondrial">
    <location>
        <begin position="57"/>
        <end position="647"/>
    </location>
</feature>
<feature type="region of interest" description="Disordered" evidence="5">
    <location>
        <begin position="61"/>
        <end position="112"/>
    </location>
</feature>
<feature type="compositionally biased region" description="Polar residues" evidence="5">
    <location>
        <begin position="79"/>
        <end position="112"/>
    </location>
</feature>
<feature type="active site" evidence="3">
    <location>
        <position position="452"/>
    </location>
</feature>
<feature type="binding site" evidence="3">
    <location>
        <position position="224"/>
    </location>
    <ligand>
        <name>substrate</name>
    </ligand>
</feature>
<feature type="binding site" evidence="3">
    <location>
        <position position="341"/>
    </location>
    <ligand>
        <name>substrate</name>
    </ligand>
</feature>
<feature type="binding site" evidence="3">
    <location>
        <position position="360"/>
    </location>
    <ligand>
        <name>substrate</name>
    </ligand>
</feature>
<feature type="binding site" description="in other chain" evidence="3">
    <location>
        <position position="393"/>
    </location>
    <ligand>
        <name>pyridoxal 5'-phosphate</name>
        <dbReference type="ChEBI" id="CHEBI:597326"/>
        <note>ligand shared between dimeric partners</note>
    </ligand>
</feature>
<feature type="binding site" description="in other chain" evidence="3">
    <location>
        <position position="421"/>
    </location>
    <ligand>
        <name>pyridoxal 5'-phosphate</name>
        <dbReference type="ChEBI" id="CHEBI:597326"/>
        <note>ligand shared between dimeric partners</note>
    </ligand>
</feature>
<feature type="binding site" description="in other chain" evidence="3">
    <location>
        <position position="449"/>
    </location>
    <ligand>
        <name>pyridoxal 5'-phosphate</name>
        <dbReference type="ChEBI" id="CHEBI:597326"/>
        <note>ligand shared between dimeric partners</note>
    </ligand>
</feature>
<feature type="binding site" evidence="3">
    <location>
        <position position="481"/>
    </location>
    <ligand>
        <name>pyridoxal 5'-phosphate</name>
        <dbReference type="ChEBI" id="CHEBI:597326"/>
        <note>ligand shared between dimeric partners</note>
    </ligand>
</feature>
<feature type="binding site" evidence="3">
    <location>
        <position position="482"/>
    </location>
    <ligand>
        <name>pyridoxal 5'-phosphate</name>
        <dbReference type="ChEBI" id="CHEBI:597326"/>
        <note>ligand shared between dimeric partners</note>
    </ligand>
</feature>
<feature type="binding site" evidence="3">
    <location>
        <position position="569"/>
    </location>
    <ligand>
        <name>substrate</name>
    </ligand>
</feature>
<feature type="modified residue" description="N6-(pyridoxal phosphate)lysine" evidence="3">
    <location>
        <position position="452"/>
    </location>
</feature>
<feature type="modified residue" description="Hydroxyproline" evidence="2">
    <location>
        <position position="583"/>
    </location>
</feature>